<evidence type="ECO:0000305" key="1"/>
<protein>
    <recommendedName>
        <fullName>Putative protein YddJ</fullName>
    </recommendedName>
</protein>
<dbReference type="EMBL" id="U00096">
    <property type="status" value="NOT_ANNOTATED_CDS"/>
    <property type="molecule type" value="Genomic_DNA"/>
</dbReference>
<dbReference type="EMBL" id="AP009048">
    <property type="protein sequence ID" value="BAE76449.1"/>
    <property type="molecule type" value="Genomic_DNA"/>
</dbReference>
<dbReference type="PIR" id="A64900">
    <property type="entry name" value="A64900"/>
</dbReference>
<dbReference type="RefSeq" id="WP_011443590.1">
    <property type="nucleotide sequence ID" value="NZ_CP009789.1"/>
</dbReference>
<dbReference type="BioGRID" id="4260182">
    <property type="interactions" value="19"/>
</dbReference>
<dbReference type="FunCoup" id="P76122">
    <property type="interactions" value="146"/>
</dbReference>
<dbReference type="IntAct" id="P76122">
    <property type="interactions" value="3"/>
</dbReference>
<dbReference type="KEGG" id="ecj:JW1466"/>
<dbReference type="PATRIC" id="fig|1411691.4.peg.798"/>
<dbReference type="EchoBASE" id="EB3543"/>
<dbReference type="eggNOG" id="COG4886">
    <property type="taxonomic scope" value="Bacteria"/>
</dbReference>
<dbReference type="HOGENOM" id="CLU_173164_0_0_6"/>
<dbReference type="InParanoid" id="P76122"/>
<dbReference type="PRO" id="PR:P76122"/>
<dbReference type="Proteomes" id="UP000000625">
    <property type="component" value="Chromosome"/>
</dbReference>
<feature type="chain" id="PRO_0000168944" description="Putative protein YddJ">
    <location>
        <begin position="1"/>
        <end position="111"/>
    </location>
</feature>
<organism>
    <name type="scientific">Escherichia coli (strain K12)</name>
    <dbReference type="NCBI Taxonomy" id="83333"/>
    <lineage>
        <taxon>Bacteria</taxon>
        <taxon>Pseudomonadati</taxon>
        <taxon>Pseudomonadota</taxon>
        <taxon>Gammaproteobacteria</taxon>
        <taxon>Enterobacterales</taxon>
        <taxon>Enterobacteriaceae</taxon>
        <taxon>Escherichia</taxon>
    </lineage>
</organism>
<accession>P76122</accession>
<accession>Q2MBA7</accession>
<gene>
    <name type="primary">yddJ</name>
    <name type="ordered locus">b1470</name>
    <name type="ordered locus">JW1466</name>
</gene>
<keyword id="KW-1185">Reference proteome</keyword>
<proteinExistence type="uncertain"/>
<sequence>MQLMLFNLFSPALKLNTGLAILSPGAFEVHSDGIDVDNELFHYPIKKAYTPYNIHTYKTEEVVNQMNIKVKNMTLDEINNTYCNNDYYNQAIREEPIDLLDRSFSSSSWPF</sequence>
<name>YDDJ_ECOLI</name>
<comment type="caution">
    <text evidence="1">Could be the product of a pseudogene, it is missing about 320 N-terminal residues compared to orthologs.</text>
</comment>
<reference key="1">
    <citation type="journal article" date="1997" name="Science">
        <title>The complete genome sequence of Escherichia coli K-12.</title>
        <authorList>
            <person name="Blattner F.R."/>
            <person name="Plunkett G. III"/>
            <person name="Bloch C.A."/>
            <person name="Perna N.T."/>
            <person name="Burland V."/>
            <person name="Riley M."/>
            <person name="Collado-Vides J."/>
            <person name="Glasner J.D."/>
            <person name="Rode C.K."/>
            <person name="Mayhew G.F."/>
            <person name="Gregor J."/>
            <person name="Davis N.W."/>
            <person name="Kirkpatrick H.A."/>
            <person name="Goeden M.A."/>
            <person name="Rose D.J."/>
            <person name="Mau B."/>
            <person name="Shao Y."/>
        </authorList>
    </citation>
    <scope>NUCLEOTIDE SEQUENCE [LARGE SCALE GENOMIC DNA]</scope>
    <source>
        <strain>K12 / MG1655 / ATCC 47076</strain>
    </source>
</reference>
<reference key="2">
    <citation type="journal article" date="2006" name="Mol. Syst. Biol.">
        <title>Highly accurate genome sequences of Escherichia coli K-12 strains MG1655 and W3110.</title>
        <authorList>
            <person name="Hayashi K."/>
            <person name="Morooka N."/>
            <person name="Yamamoto Y."/>
            <person name="Fujita K."/>
            <person name="Isono K."/>
            <person name="Choi S."/>
            <person name="Ohtsubo E."/>
            <person name="Baba T."/>
            <person name="Wanner B.L."/>
            <person name="Mori H."/>
            <person name="Horiuchi T."/>
        </authorList>
    </citation>
    <scope>NUCLEOTIDE SEQUENCE [LARGE SCALE GENOMIC DNA]</scope>
    <source>
        <strain>K12 / W3110 / ATCC 27325 / DSM 5911</strain>
    </source>
</reference>